<sequence length="504" mass="56723">MPATSMEELVSLCKRRGFIFQGSEIYGGLQGFWDYGPLGVELKNNIKASWWRANVYERDDMEGLDAAIIMHRLVLRHSGHEATFSDPMVDNRKTKKRYRLDHLVKDQKPDVVAQVAEGIGESVENFAAVVAALVAHPAKAAEVLVAAGVRDPFSGEVGDWTEPRPFNMMFKTSIGPVADEDSFGYLRPETAQGIFTNFKNVVDSTSRRLPFGIAQIGKAFRNEITPRNFIFRVRELEQMEIEFFCTPGTDEAWHQHWLEARLAWWEAQGIPREKIQILDVPKEDLAHYSKRTYDLMYNYPTLGYEEIEGIANRTDFDLGSHTKAQAELGIQARVEENFDSVAKLTIPHPETNKPVVPFVIEPSAGVDRAMLAVLAEAYTKETLENGSERIVLKLKPHLAPIKVAVIPLARNREEITSVAKAIKAKLQSLGLGRVLYEDSGNIGKAYRRHDEVGTPYCVTVDFETVGKGEDPALTDTVTVRDRDTLGQERVRISELANWLQARLR</sequence>
<dbReference type="EC" id="6.1.1.14" evidence="1"/>
<dbReference type="EMBL" id="CP000359">
    <property type="protein sequence ID" value="ABF46011.1"/>
    <property type="molecule type" value="Genomic_DNA"/>
</dbReference>
<dbReference type="RefSeq" id="WP_011530842.1">
    <property type="nucleotide sequence ID" value="NC_008025.1"/>
</dbReference>
<dbReference type="SMR" id="Q1IXM3"/>
<dbReference type="STRING" id="319795.Dgeo_1716"/>
<dbReference type="KEGG" id="dge:Dgeo_1716"/>
<dbReference type="eggNOG" id="COG0423">
    <property type="taxonomic scope" value="Bacteria"/>
</dbReference>
<dbReference type="HOGENOM" id="CLU_015515_2_1_0"/>
<dbReference type="Proteomes" id="UP000002431">
    <property type="component" value="Chromosome"/>
</dbReference>
<dbReference type="GO" id="GO:0005737">
    <property type="term" value="C:cytoplasm"/>
    <property type="evidence" value="ECO:0007669"/>
    <property type="project" value="UniProtKB-SubCell"/>
</dbReference>
<dbReference type="GO" id="GO:0005524">
    <property type="term" value="F:ATP binding"/>
    <property type="evidence" value="ECO:0007669"/>
    <property type="project" value="UniProtKB-UniRule"/>
</dbReference>
<dbReference type="GO" id="GO:0004820">
    <property type="term" value="F:glycine-tRNA ligase activity"/>
    <property type="evidence" value="ECO:0000250"/>
    <property type="project" value="UniProtKB"/>
</dbReference>
<dbReference type="GO" id="GO:0046983">
    <property type="term" value="F:protein dimerization activity"/>
    <property type="evidence" value="ECO:0000250"/>
    <property type="project" value="UniProtKB"/>
</dbReference>
<dbReference type="GO" id="GO:0006426">
    <property type="term" value="P:glycyl-tRNA aminoacylation"/>
    <property type="evidence" value="ECO:0007669"/>
    <property type="project" value="UniProtKB-UniRule"/>
</dbReference>
<dbReference type="CDD" id="cd00774">
    <property type="entry name" value="GlyRS-like_core"/>
    <property type="match status" value="1"/>
</dbReference>
<dbReference type="CDD" id="cd00858">
    <property type="entry name" value="GlyRS_anticodon"/>
    <property type="match status" value="1"/>
</dbReference>
<dbReference type="FunFam" id="3.40.50.800:FF:000052">
    <property type="entry name" value="Glycine--tRNA ligase"/>
    <property type="match status" value="1"/>
</dbReference>
<dbReference type="Gene3D" id="3.30.40.230">
    <property type="match status" value="1"/>
</dbReference>
<dbReference type="Gene3D" id="3.40.50.800">
    <property type="entry name" value="Anticodon-binding domain"/>
    <property type="match status" value="1"/>
</dbReference>
<dbReference type="Gene3D" id="3.30.930.10">
    <property type="entry name" value="Bira Bifunctional Protein, Domain 2"/>
    <property type="match status" value="1"/>
</dbReference>
<dbReference type="HAMAP" id="MF_00253_B">
    <property type="entry name" value="Gly_tRNA_synth_B"/>
    <property type="match status" value="1"/>
</dbReference>
<dbReference type="InterPro" id="IPR002314">
    <property type="entry name" value="aa-tRNA-synt_IIb"/>
</dbReference>
<dbReference type="InterPro" id="IPR006195">
    <property type="entry name" value="aa-tRNA-synth_II"/>
</dbReference>
<dbReference type="InterPro" id="IPR045864">
    <property type="entry name" value="aa-tRNA-synth_II/BPL/LPL"/>
</dbReference>
<dbReference type="InterPro" id="IPR004154">
    <property type="entry name" value="Anticodon-bd"/>
</dbReference>
<dbReference type="InterPro" id="IPR036621">
    <property type="entry name" value="Anticodon-bd_dom_sf"/>
</dbReference>
<dbReference type="InterPro" id="IPR027031">
    <property type="entry name" value="Gly-tRNA_synthase/POLG2"/>
</dbReference>
<dbReference type="InterPro" id="IPR022961">
    <property type="entry name" value="Gly_tRNA_ligase_bac"/>
</dbReference>
<dbReference type="InterPro" id="IPR033731">
    <property type="entry name" value="GlyRS-like_core"/>
</dbReference>
<dbReference type="InterPro" id="IPR002315">
    <property type="entry name" value="tRNA-synt_gly"/>
</dbReference>
<dbReference type="NCBIfam" id="TIGR00389">
    <property type="entry name" value="glyS_dimeric"/>
    <property type="match status" value="1"/>
</dbReference>
<dbReference type="NCBIfam" id="NF003211">
    <property type="entry name" value="PRK04173.1"/>
    <property type="match status" value="1"/>
</dbReference>
<dbReference type="PANTHER" id="PTHR10745:SF8">
    <property type="entry name" value="DNA POLYMERASE SUBUNIT GAMMA-2, MITOCHONDRIAL"/>
    <property type="match status" value="1"/>
</dbReference>
<dbReference type="PANTHER" id="PTHR10745">
    <property type="entry name" value="GLYCYL-TRNA SYNTHETASE/DNA POLYMERASE SUBUNIT GAMMA-2"/>
    <property type="match status" value="1"/>
</dbReference>
<dbReference type="Pfam" id="PF03129">
    <property type="entry name" value="HGTP_anticodon"/>
    <property type="match status" value="1"/>
</dbReference>
<dbReference type="Pfam" id="PF00587">
    <property type="entry name" value="tRNA-synt_2b"/>
    <property type="match status" value="1"/>
</dbReference>
<dbReference type="PRINTS" id="PR01043">
    <property type="entry name" value="TRNASYNTHGLY"/>
</dbReference>
<dbReference type="SUPFAM" id="SSF52954">
    <property type="entry name" value="Class II aaRS ABD-related"/>
    <property type="match status" value="1"/>
</dbReference>
<dbReference type="SUPFAM" id="SSF55681">
    <property type="entry name" value="Class II aaRS and biotin synthetases"/>
    <property type="match status" value="1"/>
</dbReference>
<dbReference type="PROSITE" id="PS50862">
    <property type="entry name" value="AA_TRNA_LIGASE_II"/>
    <property type="match status" value="1"/>
</dbReference>
<keyword id="KW-0030">Aminoacyl-tRNA synthetase</keyword>
<keyword id="KW-0067">ATP-binding</keyword>
<keyword id="KW-0963">Cytoplasm</keyword>
<keyword id="KW-0436">Ligase</keyword>
<keyword id="KW-0547">Nucleotide-binding</keyword>
<keyword id="KW-0648">Protein biosynthesis</keyword>
<feature type="chain" id="PRO_1000047372" description="Glycine--tRNA ligase">
    <location>
        <begin position="1"/>
        <end position="504"/>
    </location>
</feature>
<feature type="binding site" evidence="1">
    <location>
        <position position="99"/>
    </location>
    <ligand>
        <name>substrate</name>
    </ligand>
</feature>
<feature type="binding site" evidence="1">
    <location>
        <position position="189"/>
    </location>
    <ligand>
        <name>substrate</name>
    </ligand>
</feature>
<feature type="binding site" evidence="1">
    <location>
        <begin position="221"/>
        <end position="223"/>
    </location>
    <ligand>
        <name>ATP</name>
        <dbReference type="ChEBI" id="CHEBI:30616"/>
    </ligand>
</feature>
<feature type="binding site" evidence="1">
    <location>
        <begin position="231"/>
        <end position="236"/>
    </location>
    <ligand>
        <name>ATP</name>
        <dbReference type="ChEBI" id="CHEBI:30616"/>
    </ligand>
</feature>
<feature type="binding site" evidence="1">
    <location>
        <begin position="236"/>
        <end position="240"/>
    </location>
    <ligand>
        <name>substrate</name>
    </ligand>
</feature>
<feature type="binding site" evidence="1">
    <location>
        <begin position="306"/>
        <end position="307"/>
    </location>
    <ligand>
        <name>ATP</name>
        <dbReference type="ChEBI" id="CHEBI:30616"/>
    </ligand>
</feature>
<feature type="binding site" evidence="1">
    <location>
        <begin position="361"/>
        <end position="365"/>
    </location>
    <ligand>
        <name>substrate</name>
    </ligand>
</feature>
<feature type="binding site" evidence="1">
    <location>
        <begin position="365"/>
        <end position="368"/>
    </location>
    <ligand>
        <name>ATP</name>
        <dbReference type="ChEBI" id="CHEBI:30616"/>
    </ligand>
</feature>
<name>SYG_DEIGD</name>
<comment type="function">
    <text evidence="1">Catalyzes the attachment of glycine to tRNA(Gly).</text>
</comment>
<comment type="catalytic activity">
    <reaction evidence="1">
        <text>tRNA(Gly) + glycine + ATP = glycyl-tRNA(Gly) + AMP + diphosphate</text>
        <dbReference type="Rhea" id="RHEA:16013"/>
        <dbReference type="Rhea" id="RHEA-COMP:9664"/>
        <dbReference type="Rhea" id="RHEA-COMP:9683"/>
        <dbReference type="ChEBI" id="CHEBI:30616"/>
        <dbReference type="ChEBI" id="CHEBI:33019"/>
        <dbReference type="ChEBI" id="CHEBI:57305"/>
        <dbReference type="ChEBI" id="CHEBI:78442"/>
        <dbReference type="ChEBI" id="CHEBI:78522"/>
        <dbReference type="ChEBI" id="CHEBI:456215"/>
        <dbReference type="EC" id="6.1.1.14"/>
    </reaction>
</comment>
<comment type="subunit">
    <text evidence="1">Homodimer.</text>
</comment>
<comment type="subcellular location">
    <subcellularLocation>
        <location evidence="1">Cytoplasm</location>
    </subcellularLocation>
</comment>
<comment type="similarity">
    <text evidence="1">Belongs to the class-II aminoacyl-tRNA synthetase family.</text>
</comment>
<reference key="1">
    <citation type="submission" date="2006-04" db="EMBL/GenBank/DDBJ databases">
        <title>Complete sequence of chromosome of Deinococcus geothermalis DSM 11300.</title>
        <authorList>
            <person name="Copeland A."/>
            <person name="Lucas S."/>
            <person name="Lapidus A."/>
            <person name="Barry K."/>
            <person name="Detter J.C."/>
            <person name="Glavina del Rio T."/>
            <person name="Hammon N."/>
            <person name="Israni S."/>
            <person name="Dalin E."/>
            <person name="Tice H."/>
            <person name="Pitluck S."/>
            <person name="Brettin T."/>
            <person name="Bruce D."/>
            <person name="Han C."/>
            <person name="Tapia R."/>
            <person name="Saunders E."/>
            <person name="Gilna P."/>
            <person name="Schmutz J."/>
            <person name="Larimer F."/>
            <person name="Land M."/>
            <person name="Hauser L."/>
            <person name="Kyrpides N."/>
            <person name="Kim E."/>
            <person name="Daly M.J."/>
            <person name="Fredrickson J.K."/>
            <person name="Makarova K.S."/>
            <person name="Gaidamakova E.K."/>
            <person name="Zhai M."/>
            <person name="Richardson P."/>
        </authorList>
    </citation>
    <scope>NUCLEOTIDE SEQUENCE [LARGE SCALE GENOMIC DNA]</scope>
    <source>
        <strain>DSM 11300 / CIP 105573 / AG-3a</strain>
    </source>
</reference>
<accession>Q1IXM3</accession>
<gene>
    <name evidence="1" type="primary">glyQS</name>
    <name type="ordered locus">Dgeo_1716</name>
</gene>
<organism>
    <name type="scientific">Deinococcus geothermalis (strain DSM 11300 / CIP 105573 / AG-3a)</name>
    <dbReference type="NCBI Taxonomy" id="319795"/>
    <lineage>
        <taxon>Bacteria</taxon>
        <taxon>Thermotogati</taxon>
        <taxon>Deinococcota</taxon>
        <taxon>Deinococci</taxon>
        <taxon>Deinococcales</taxon>
        <taxon>Deinococcaceae</taxon>
        <taxon>Deinococcus</taxon>
    </lineage>
</organism>
<protein>
    <recommendedName>
        <fullName evidence="1">Glycine--tRNA ligase</fullName>
        <ecNumber evidence="1">6.1.1.14</ecNumber>
    </recommendedName>
    <alternativeName>
        <fullName evidence="1">Glycyl-tRNA synthetase</fullName>
        <shortName evidence="1">GlyRS</shortName>
    </alternativeName>
</protein>
<proteinExistence type="inferred from homology"/>
<evidence type="ECO:0000255" key="1">
    <source>
        <dbReference type="HAMAP-Rule" id="MF_00253"/>
    </source>
</evidence>